<protein>
    <recommendedName>
        <fullName>T-cell receptor gamma chain V region V108A</fullName>
    </recommendedName>
</protein>
<sequence>MLLLRWFTSCCLWVFGLGQLEQTELSVTRETDENVQISCIVYLPYFSNTAIHWYRQKTNQQFEYLIYVATNYNQRPLGGKHKKIEASKDFKSSTSTLEINYLKKEDEATYYCAVWMRWSSGFHKVFAEGTKLIVI</sequence>
<reference key="1">
    <citation type="journal article" date="1985" name="Cell">
        <title>Structure, organization, and somatic rearrangement of T cell gamma genes.</title>
        <authorList>
            <person name="Hayday A.C."/>
            <person name="Saito H."/>
            <person name="Gillies S.D."/>
            <person name="Kranz D.M."/>
            <person name="Tanigawa G."/>
            <person name="Eisen H.N."/>
            <person name="Tonegawa S."/>
        </authorList>
    </citation>
    <scope>NUCLEOTIDE SEQUENCE</scope>
</reference>
<reference key="2">
    <citation type="journal article" date="1984" name="Nature">
        <title>Complete primary structure of a heterodimeric T-cell receptor deduced from cDNA sequences.</title>
        <authorList>
            <person name="Saito H."/>
            <person name="Kranz D.M."/>
            <person name="Takagaki Y."/>
            <person name="Hayday A.C."/>
            <person name="Eisen H.N."/>
            <person name="Tonegawa S."/>
        </authorList>
    </citation>
    <scope>NUCLEOTIDE SEQUENCE (CLONE PHDS4/PHDS203)</scope>
    <source>
        <strain>BALB.B</strain>
    </source>
</reference>
<proteinExistence type="predicted"/>
<accession>P01740</accession>
<dbReference type="PIR" id="A90859">
    <property type="entry name" value="RWMSV1"/>
</dbReference>
<dbReference type="SMR" id="P01740"/>
<dbReference type="FunCoup" id="P01740">
    <property type="interactions" value="513"/>
</dbReference>
<dbReference type="UCSC" id="uc007pow.1">
    <property type="organism name" value="mouse"/>
</dbReference>
<dbReference type="InParanoid" id="P01740"/>
<dbReference type="Proteomes" id="UP000000589">
    <property type="component" value="Unplaced"/>
</dbReference>
<dbReference type="RNAct" id="P01740">
    <property type="molecule type" value="protein"/>
</dbReference>
<dbReference type="GO" id="GO:0009897">
    <property type="term" value="C:external side of plasma membrane"/>
    <property type="evidence" value="ECO:0000318"/>
    <property type="project" value="GO_Central"/>
</dbReference>
<dbReference type="GO" id="GO:0042101">
    <property type="term" value="C:T cell receptor complex"/>
    <property type="evidence" value="ECO:0007669"/>
    <property type="project" value="UniProtKB-KW"/>
</dbReference>
<dbReference type="GO" id="GO:0002250">
    <property type="term" value="P:adaptive immune response"/>
    <property type="evidence" value="ECO:0007669"/>
    <property type="project" value="UniProtKB-KW"/>
</dbReference>
<dbReference type="CDD" id="cd04982">
    <property type="entry name" value="IgV_TCR_gamma"/>
    <property type="match status" value="1"/>
</dbReference>
<dbReference type="FunFam" id="2.60.40.10:FF:001649">
    <property type="entry name" value="T cell receptor gamma, variable 3"/>
    <property type="match status" value="1"/>
</dbReference>
<dbReference type="Gene3D" id="2.60.40.10">
    <property type="entry name" value="Immunoglobulins"/>
    <property type="match status" value="1"/>
</dbReference>
<dbReference type="InterPro" id="IPR007110">
    <property type="entry name" value="Ig-like_dom"/>
</dbReference>
<dbReference type="InterPro" id="IPR036179">
    <property type="entry name" value="Ig-like_dom_sf"/>
</dbReference>
<dbReference type="InterPro" id="IPR013783">
    <property type="entry name" value="Ig-like_fold"/>
</dbReference>
<dbReference type="InterPro" id="IPR003599">
    <property type="entry name" value="Ig_sub"/>
</dbReference>
<dbReference type="InterPro" id="IPR013106">
    <property type="entry name" value="Ig_V-set"/>
</dbReference>
<dbReference type="InterPro" id="IPR051117">
    <property type="entry name" value="TRG_var/const_region"/>
</dbReference>
<dbReference type="PANTHER" id="PTHR19256:SF40">
    <property type="entry name" value="NON-FUNCTIONAL T CELL RECEPTOR GAMMA VARIABLE 10-RELATED"/>
    <property type="match status" value="1"/>
</dbReference>
<dbReference type="PANTHER" id="PTHR19256">
    <property type="entry name" value="T-CELL RECEPTOR GAMMA CHAIN"/>
    <property type="match status" value="1"/>
</dbReference>
<dbReference type="Pfam" id="PF07686">
    <property type="entry name" value="V-set"/>
    <property type="match status" value="1"/>
</dbReference>
<dbReference type="SMART" id="SM00409">
    <property type="entry name" value="IG"/>
    <property type="match status" value="1"/>
</dbReference>
<dbReference type="SMART" id="SM00406">
    <property type="entry name" value="IGv"/>
    <property type="match status" value="1"/>
</dbReference>
<dbReference type="SUPFAM" id="SSF48726">
    <property type="entry name" value="Immunoglobulin"/>
    <property type="match status" value="1"/>
</dbReference>
<dbReference type="PROSITE" id="PS50835">
    <property type="entry name" value="IG_LIKE"/>
    <property type="match status" value="1"/>
</dbReference>
<feature type="signal peptide">
    <location>
        <begin position="1"/>
        <end position="18"/>
    </location>
</feature>
<feature type="chain" id="PRO_0000033607" description="T-cell receptor gamma chain V region V108A">
    <location>
        <begin position="19"/>
        <end position="135"/>
    </location>
</feature>
<feature type="region of interest" description="V segment">
    <location>
        <begin position="19"/>
        <end position="116"/>
    </location>
</feature>
<feature type="region of interest" description="J segment">
    <location>
        <begin position="117"/>
        <end position="135"/>
    </location>
</feature>
<feature type="non-terminal residue">
    <location>
        <position position="135"/>
    </location>
</feature>
<name>TVC1_MOUSE</name>
<organism>
    <name type="scientific">Mus musculus</name>
    <name type="common">Mouse</name>
    <dbReference type="NCBI Taxonomy" id="10090"/>
    <lineage>
        <taxon>Eukaryota</taxon>
        <taxon>Metazoa</taxon>
        <taxon>Chordata</taxon>
        <taxon>Craniata</taxon>
        <taxon>Vertebrata</taxon>
        <taxon>Euteleostomi</taxon>
        <taxon>Mammalia</taxon>
        <taxon>Eutheria</taxon>
        <taxon>Euarchontoglires</taxon>
        <taxon>Glires</taxon>
        <taxon>Rodentia</taxon>
        <taxon>Myomorpha</taxon>
        <taxon>Muroidea</taxon>
        <taxon>Muridae</taxon>
        <taxon>Murinae</taxon>
        <taxon>Mus</taxon>
        <taxon>Mus</taxon>
    </lineage>
</organism>
<comment type="miscellaneous">
    <text>This mRNA was isolated from a cytotoxic T-lymphocyte. The gene corresponding to this mRNA is rearranged specifically in T-cells and its organization is similar to an Ig gene, with V (or V+D), J, and C regions.</text>
</comment>
<keyword id="KW-1064">Adaptive immunity</keyword>
<keyword id="KW-0391">Immunity</keyword>
<keyword id="KW-0393">Immunoglobulin domain</keyword>
<keyword id="KW-0675">Receptor</keyword>
<keyword id="KW-1185">Reference proteome</keyword>
<keyword id="KW-0732">Signal</keyword>
<keyword id="KW-1279">T cell receptor</keyword>